<protein>
    <recommendedName>
        <fullName>Prefoldin subunit beta</fullName>
    </recommendedName>
    <alternativeName>
        <fullName>GimC subunit beta</fullName>
    </alternativeName>
</protein>
<feature type="chain" id="PRO_0000124865" description="Prefoldin subunit beta">
    <location>
        <begin position="1"/>
        <end position="126"/>
    </location>
</feature>
<organism>
    <name type="scientific">Pyrobaculum aerophilum (strain ATCC 51768 / DSM 7523 / JCM 9630 / CIP 104966 / NBRC 100827 / IM2)</name>
    <dbReference type="NCBI Taxonomy" id="178306"/>
    <lineage>
        <taxon>Archaea</taxon>
        <taxon>Thermoproteota</taxon>
        <taxon>Thermoprotei</taxon>
        <taxon>Thermoproteales</taxon>
        <taxon>Thermoproteaceae</taxon>
        <taxon>Pyrobaculum</taxon>
    </lineage>
</organism>
<sequence>MAQIPPSLQDLVNRFNQAQAQLQNVLLRKQQYEAELKEVEKAISEIERLPQDAKIFKNVGNFLVPQSRDVALQELRDRKELLELHVKTLTRQESMLREQLDKLREEINKELAKLKGGATEAAKGGG</sequence>
<gene>
    <name type="primary">pfdB</name>
    <name type="ordered locus">PAE2199</name>
</gene>
<comment type="function">
    <text evidence="1">Molecular chaperone capable of stabilizing a range of proteins. Seems to fulfill an ATP-independent, HSP70-like function in archaeal de novo protein folding (By similarity).</text>
</comment>
<comment type="subunit">
    <text evidence="1">Heterohexamer of two alpha and four beta subunits.</text>
</comment>
<comment type="subcellular location">
    <subcellularLocation>
        <location evidence="1">Cytoplasm</location>
    </subcellularLocation>
</comment>
<comment type="similarity">
    <text evidence="2">Belongs to the prefoldin subunit beta family.</text>
</comment>
<evidence type="ECO:0000250" key="1"/>
<evidence type="ECO:0000305" key="2"/>
<keyword id="KW-0143">Chaperone</keyword>
<keyword id="KW-0963">Cytoplasm</keyword>
<keyword id="KW-1185">Reference proteome</keyword>
<dbReference type="EMBL" id="AE009441">
    <property type="protein sequence ID" value="AAL64022.1"/>
    <property type="molecule type" value="Genomic_DNA"/>
</dbReference>
<dbReference type="RefSeq" id="WP_011008490.1">
    <property type="nucleotide sequence ID" value="NC_003364.1"/>
</dbReference>
<dbReference type="SMR" id="Q8ZVN4"/>
<dbReference type="FunCoup" id="Q8ZVN4">
    <property type="interactions" value="173"/>
</dbReference>
<dbReference type="STRING" id="178306.PAE2199"/>
<dbReference type="EnsemblBacteria" id="AAL64022">
    <property type="protein sequence ID" value="AAL64022"/>
    <property type="gene ID" value="PAE2199"/>
</dbReference>
<dbReference type="GeneID" id="1464356"/>
<dbReference type="KEGG" id="pai:PAE2199"/>
<dbReference type="PATRIC" id="fig|178306.9.peg.1633"/>
<dbReference type="eggNOG" id="arCOG01342">
    <property type="taxonomic scope" value="Archaea"/>
</dbReference>
<dbReference type="HOGENOM" id="CLU_131909_2_1_2"/>
<dbReference type="InParanoid" id="Q8ZVN4"/>
<dbReference type="Proteomes" id="UP000002439">
    <property type="component" value="Chromosome"/>
</dbReference>
<dbReference type="GO" id="GO:0005737">
    <property type="term" value="C:cytoplasm"/>
    <property type="evidence" value="ECO:0000318"/>
    <property type="project" value="GO_Central"/>
</dbReference>
<dbReference type="GO" id="GO:0016272">
    <property type="term" value="C:prefoldin complex"/>
    <property type="evidence" value="ECO:0000318"/>
    <property type="project" value="GO_Central"/>
</dbReference>
<dbReference type="GO" id="GO:0051087">
    <property type="term" value="F:protein-folding chaperone binding"/>
    <property type="evidence" value="ECO:0000318"/>
    <property type="project" value="GO_Central"/>
</dbReference>
<dbReference type="GO" id="GO:0051082">
    <property type="term" value="F:unfolded protein binding"/>
    <property type="evidence" value="ECO:0007669"/>
    <property type="project" value="UniProtKB-UniRule"/>
</dbReference>
<dbReference type="GO" id="GO:0051131">
    <property type="term" value="P:chaperone-mediated protein complex assembly"/>
    <property type="evidence" value="ECO:0000318"/>
    <property type="project" value="GO_Central"/>
</dbReference>
<dbReference type="GO" id="GO:0006457">
    <property type="term" value="P:protein folding"/>
    <property type="evidence" value="ECO:0000318"/>
    <property type="project" value="GO_Central"/>
</dbReference>
<dbReference type="CDD" id="cd23162">
    <property type="entry name" value="Prefoldin_beta_GimC"/>
    <property type="match status" value="1"/>
</dbReference>
<dbReference type="FunFam" id="1.10.287.370:FF:000013">
    <property type="entry name" value="Prefoldin subunit beta"/>
    <property type="match status" value="1"/>
</dbReference>
<dbReference type="Gene3D" id="1.10.287.370">
    <property type="match status" value="1"/>
</dbReference>
<dbReference type="HAMAP" id="MF_00307">
    <property type="entry name" value="PfdB"/>
    <property type="match status" value="1"/>
</dbReference>
<dbReference type="InterPro" id="IPR002777">
    <property type="entry name" value="PFD_beta-like"/>
</dbReference>
<dbReference type="InterPro" id="IPR012713">
    <property type="entry name" value="PfdB"/>
</dbReference>
<dbReference type="InterPro" id="IPR009053">
    <property type="entry name" value="Prefoldin"/>
</dbReference>
<dbReference type="NCBIfam" id="TIGR02338">
    <property type="entry name" value="gimC_beta"/>
    <property type="match status" value="1"/>
</dbReference>
<dbReference type="PANTHER" id="PTHR21431">
    <property type="entry name" value="PREFOLDIN SUBUNIT 6"/>
    <property type="match status" value="1"/>
</dbReference>
<dbReference type="PANTHER" id="PTHR21431:SF0">
    <property type="entry name" value="PREFOLDIN SUBUNIT 6"/>
    <property type="match status" value="1"/>
</dbReference>
<dbReference type="Pfam" id="PF01920">
    <property type="entry name" value="Prefoldin_2"/>
    <property type="match status" value="1"/>
</dbReference>
<dbReference type="SUPFAM" id="SSF46579">
    <property type="entry name" value="Prefoldin"/>
    <property type="match status" value="1"/>
</dbReference>
<accession>Q8ZVN4</accession>
<proteinExistence type="inferred from homology"/>
<reference key="1">
    <citation type="journal article" date="2002" name="Proc. Natl. Acad. Sci. U.S.A.">
        <title>Genome sequence of the hyperthermophilic crenarchaeon Pyrobaculum aerophilum.</title>
        <authorList>
            <person name="Fitz-Gibbon S.T."/>
            <person name="Ladner H."/>
            <person name="Kim U.-J."/>
            <person name="Stetter K.O."/>
            <person name="Simon M.I."/>
            <person name="Miller J.H."/>
        </authorList>
    </citation>
    <scope>NUCLEOTIDE SEQUENCE [LARGE SCALE GENOMIC DNA]</scope>
    <source>
        <strain>ATCC 51768 / DSM 7523 / JCM 9630 / CIP 104966 / NBRC 100827 / IM2</strain>
    </source>
</reference>
<name>PFDB_PYRAE</name>